<evidence type="ECO:0000255" key="1">
    <source>
        <dbReference type="HAMAP-Rule" id="MF_00074"/>
    </source>
</evidence>
<name>RSMG_ANADE</name>
<comment type="function">
    <text evidence="1">Specifically methylates the N7 position of guanine in position 527 of 16S rRNA.</text>
</comment>
<comment type="catalytic activity">
    <reaction evidence="1">
        <text>guanosine(527) in 16S rRNA + S-adenosyl-L-methionine = N(7)-methylguanosine(527) in 16S rRNA + S-adenosyl-L-homocysteine</text>
        <dbReference type="Rhea" id="RHEA:42732"/>
        <dbReference type="Rhea" id="RHEA-COMP:10209"/>
        <dbReference type="Rhea" id="RHEA-COMP:10210"/>
        <dbReference type="ChEBI" id="CHEBI:57856"/>
        <dbReference type="ChEBI" id="CHEBI:59789"/>
        <dbReference type="ChEBI" id="CHEBI:74269"/>
        <dbReference type="ChEBI" id="CHEBI:74480"/>
        <dbReference type="EC" id="2.1.1.170"/>
    </reaction>
</comment>
<comment type="subcellular location">
    <subcellularLocation>
        <location evidence="1">Cytoplasm</location>
    </subcellularLocation>
</comment>
<comment type="similarity">
    <text evidence="1">Belongs to the methyltransferase superfamily. RNA methyltransferase RsmG family.</text>
</comment>
<feature type="chain" id="PRO_1000010114" description="Ribosomal RNA small subunit methyltransferase G">
    <location>
        <begin position="1"/>
        <end position="215"/>
    </location>
</feature>
<feature type="binding site" evidence="1">
    <location>
        <position position="78"/>
    </location>
    <ligand>
        <name>S-adenosyl-L-methionine</name>
        <dbReference type="ChEBI" id="CHEBI:59789"/>
    </ligand>
</feature>
<feature type="binding site" evidence="1">
    <location>
        <position position="83"/>
    </location>
    <ligand>
        <name>S-adenosyl-L-methionine</name>
        <dbReference type="ChEBI" id="CHEBI:59789"/>
    </ligand>
</feature>
<feature type="binding site" evidence="1">
    <location>
        <begin position="128"/>
        <end position="129"/>
    </location>
    <ligand>
        <name>S-adenosyl-L-methionine</name>
        <dbReference type="ChEBI" id="CHEBI:59789"/>
    </ligand>
</feature>
<feature type="binding site" evidence="1">
    <location>
        <position position="146"/>
    </location>
    <ligand>
        <name>S-adenosyl-L-methionine</name>
        <dbReference type="ChEBI" id="CHEBI:59789"/>
    </ligand>
</feature>
<accession>Q2IHR2</accession>
<organism>
    <name type="scientific">Anaeromyxobacter dehalogenans (strain 2CP-C)</name>
    <dbReference type="NCBI Taxonomy" id="290397"/>
    <lineage>
        <taxon>Bacteria</taxon>
        <taxon>Pseudomonadati</taxon>
        <taxon>Myxococcota</taxon>
        <taxon>Myxococcia</taxon>
        <taxon>Myxococcales</taxon>
        <taxon>Cystobacterineae</taxon>
        <taxon>Anaeromyxobacteraceae</taxon>
        <taxon>Anaeromyxobacter</taxon>
    </lineage>
</organism>
<sequence>MDAAFHEALARGIEALGLPVDAAARALLERYADRLLAWNRKVNLTAITAPAELAEKHLVDSLVLLPFVAGARTLLDVGSGAGLPGIPLACVRRDLSVTCCDGVAKKIAFVKAVSAELDLRVRGVAVRAEGHPEREGLPRADAVVSRALADPDRWVPLGARYLADGGTLLAMLGREVDRAALDAAGAAEGLTLVGLDVYELPVSHAARAVARWQRK</sequence>
<dbReference type="EC" id="2.1.1.170" evidence="1"/>
<dbReference type="EMBL" id="CP000251">
    <property type="protein sequence ID" value="ABC84119.1"/>
    <property type="molecule type" value="Genomic_DNA"/>
</dbReference>
<dbReference type="RefSeq" id="WP_011423401.1">
    <property type="nucleotide sequence ID" value="NC_007760.1"/>
</dbReference>
<dbReference type="SMR" id="Q2IHR2"/>
<dbReference type="STRING" id="290397.Adeh_4356"/>
<dbReference type="KEGG" id="ade:Adeh_4356"/>
<dbReference type="eggNOG" id="COG0357">
    <property type="taxonomic scope" value="Bacteria"/>
</dbReference>
<dbReference type="HOGENOM" id="CLU_065341_2_0_7"/>
<dbReference type="OrthoDB" id="9808773at2"/>
<dbReference type="Proteomes" id="UP000001935">
    <property type="component" value="Chromosome"/>
</dbReference>
<dbReference type="GO" id="GO:0005829">
    <property type="term" value="C:cytosol"/>
    <property type="evidence" value="ECO:0007669"/>
    <property type="project" value="TreeGrafter"/>
</dbReference>
<dbReference type="GO" id="GO:0070043">
    <property type="term" value="F:rRNA (guanine-N7-)-methyltransferase activity"/>
    <property type="evidence" value="ECO:0007669"/>
    <property type="project" value="UniProtKB-UniRule"/>
</dbReference>
<dbReference type="CDD" id="cd02440">
    <property type="entry name" value="AdoMet_MTases"/>
    <property type="match status" value="1"/>
</dbReference>
<dbReference type="Gene3D" id="3.40.50.150">
    <property type="entry name" value="Vaccinia Virus protein VP39"/>
    <property type="match status" value="1"/>
</dbReference>
<dbReference type="HAMAP" id="MF_00074">
    <property type="entry name" value="16SrRNA_methyltr_G"/>
    <property type="match status" value="1"/>
</dbReference>
<dbReference type="InterPro" id="IPR003682">
    <property type="entry name" value="rRNA_ssu_MeTfrase_G"/>
</dbReference>
<dbReference type="InterPro" id="IPR029063">
    <property type="entry name" value="SAM-dependent_MTases_sf"/>
</dbReference>
<dbReference type="NCBIfam" id="TIGR00138">
    <property type="entry name" value="rsmG_gidB"/>
    <property type="match status" value="1"/>
</dbReference>
<dbReference type="PANTHER" id="PTHR31760">
    <property type="entry name" value="S-ADENOSYL-L-METHIONINE-DEPENDENT METHYLTRANSFERASES SUPERFAMILY PROTEIN"/>
    <property type="match status" value="1"/>
</dbReference>
<dbReference type="PANTHER" id="PTHR31760:SF0">
    <property type="entry name" value="S-ADENOSYL-L-METHIONINE-DEPENDENT METHYLTRANSFERASES SUPERFAMILY PROTEIN"/>
    <property type="match status" value="1"/>
</dbReference>
<dbReference type="Pfam" id="PF02527">
    <property type="entry name" value="GidB"/>
    <property type="match status" value="1"/>
</dbReference>
<dbReference type="PIRSF" id="PIRSF003078">
    <property type="entry name" value="GidB"/>
    <property type="match status" value="1"/>
</dbReference>
<dbReference type="SUPFAM" id="SSF53335">
    <property type="entry name" value="S-adenosyl-L-methionine-dependent methyltransferases"/>
    <property type="match status" value="1"/>
</dbReference>
<protein>
    <recommendedName>
        <fullName evidence="1">Ribosomal RNA small subunit methyltransferase G</fullName>
        <ecNumber evidence="1">2.1.1.170</ecNumber>
    </recommendedName>
    <alternativeName>
        <fullName evidence="1">16S rRNA 7-methylguanosine methyltransferase</fullName>
        <shortName evidence="1">16S rRNA m7G methyltransferase</shortName>
    </alternativeName>
</protein>
<proteinExistence type="inferred from homology"/>
<keyword id="KW-0963">Cytoplasm</keyword>
<keyword id="KW-0489">Methyltransferase</keyword>
<keyword id="KW-1185">Reference proteome</keyword>
<keyword id="KW-0698">rRNA processing</keyword>
<keyword id="KW-0949">S-adenosyl-L-methionine</keyword>
<keyword id="KW-0808">Transferase</keyword>
<gene>
    <name evidence="1" type="primary">rsmG</name>
    <name type="ordered locus">Adeh_4356</name>
</gene>
<reference key="1">
    <citation type="submission" date="2006-01" db="EMBL/GenBank/DDBJ databases">
        <title>Complete sequence of Anaeromyxobacter dehalogenans 2CP-C.</title>
        <authorList>
            <person name="Copeland A."/>
            <person name="Lucas S."/>
            <person name="Lapidus A."/>
            <person name="Barry K."/>
            <person name="Detter J.C."/>
            <person name="Glavina T."/>
            <person name="Hammon N."/>
            <person name="Israni S."/>
            <person name="Pitluck S."/>
            <person name="Brettin T."/>
            <person name="Bruce D."/>
            <person name="Han C."/>
            <person name="Tapia R."/>
            <person name="Gilna P."/>
            <person name="Kiss H."/>
            <person name="Schmutz J."/>
            <person name="Larimer F."/>
            <person name="Land M."/>
            <person name="Kyrpides N."/>
            <person name="Anderson I."/>
            <person name="Sanford R.A."/>
            <person name="Ritalahti K.M."/>
            <person name="Thomas H.S."/>
            <person name="Kirby J.R."/>
            <person name="Zhulin I.B."/>
            <person name="Loeffler F.E."/>
            <person name="Richardson P."/>
        </authorList>
    </citation>
    <scope>NUCLEOTIDE SEQUENCE [LARGE SCALE GENOMIC DNA]</scope>
    <source>
        <strain>2CP-C</strain>
    </source>
</reference>